<sequence>MGRIIRVTGPLVVADDMKGAKMYEVVRVGEMGLIGEIIRLEGDKAVIQVYEETAGIRPGEPVEGTGASLSVELGPGLLTAMYDGIQRPLEVLRELSGDFIARGLTAPALPRDKKWHFTPKVKVGDKVVGGDILGVVPETGIIEHRVLVPPWVEGEIVEIVEEGDYTIEEVIAKVKKPNGEIEELKMYHRWPVRVKRPYKRKLPPEVPLITGQRTIDTFFSQAKGGTAAIPGPFGSGKTVTQHQLAKWSDAQVVVYIGCGERGNEMTDVLEEFPKLKDPKTGKPLMERTVLIANTSNMPVAAREASIYTGITIAEYFRDMGYDVALMADSTSRWAEALREISGRLEEMPGEEGYPAYLASKIAEFYERAGRVITLGSDERIGSVSVIGAVSPPGGDFSEPVVQNTLRVVKVFWALDADLARRRHFPAINWLRSYSLYIDSIQDWWHKNVDPEWRAMRDRAMELLQKEAELQEIVRIVGPDALPDREKAVLIVARMLREDYLQQDAFDEVDTYCPPKKQVTMMRVILNFYERTMEAVDRGVPVDEIAKLPVREKIGRMKFEPEIEKVAALIDETNAQFEELFKKYGA</sequence>
<comment type="function">
    <text evidence="1">Component of the A-type ATP synthase that produces ATP from ADP in the presence of a proton gradient across the membrane. The A chain is the catalytic subunit.</text>
</comment>
<comment type="catalytic activity">
    <reaction evidence="1">
        <text>ATP + H2O + 4 H(+)(in) = ADP + phosphate + 5 H(+)(out)</text>
        <dbReference type="Rhea" id="RHEA:57720"/>
        <dbReference type="ChEBI" id="CHEBI:15377"/>
        <dbReference type="ChEBI" id="CHEBI:15378"/>
        <dbReference type="ChEBI" id="CHEBI:30616"/>
        <dbReference type="ChEBI" id="CHEBI:43474"/>
        <dbReference type="ChEBI" id="CHEBI:456216"/>
        <dbReference type="EC" id="7.1.2.2"/>
    </reaction>
</comment>
<comment type="subunit">
    <text evidence="1">Has multiple subunits with at least A(3), B(3), C, D, E, F, H, I and proteolipid K(x).</text>
</comment>
<comment type="subcellular location">
    <subcellularLocation>
        <location evidence="1">Cell membrane</location>
        <topology evidence="1">Peripheral membrane protein</topology>
    </subcellularLocation>
</comment>
<comment type="similarity">
    <text evidence="1">Belongs to the ATPase alpha/beta chains family.</text>
</comment>
<evidence type="ECO:0000255" key="1">
    <source>
        <dbReference type="HAMAP-Rule" id="MF_00309"/>
    </source>
</evidence>
<feature type="chain" id="PRO_1000115647" description="A-type ATP synthase subunit A">
    <location>
        <begin position="1"/>
        <end position="585"/>
    </location>
</feature>
<feature type="binding site" evidence="1">
    <location>
        <begin position="231"/>
        <end position="238"/>
    </location>
    <ligand>
        <name>ATP</name>
        <dbReference type="ChEBI" id="CHEBI:30616"/>
    </ligand>
</feature>
<dbReference type="EC" id="7.1.2.2" evidence="1"/>
<dbReference type="EMBL" id="CP000855">
    <property type="protein sequence ID" value="ACJ17242.1"/>
    <property type="molecule type" value="Genomic_DNA"/>
</dbReference>
<dbReference type="RefSeq" id="WP_012572714.1">
    <property type="nucleotide sequence ID" value="NC_011529.1"/>
</dbReference>
<dbReference type="SMR" id="B6YV14"/>
<dbReference type="STRING" id="523850.TON_1752"/>
<dbReference type="GeneID" id="7017421"/>
<dbReference type="KEGG" id="ton:TON_1752"/>
<dbReference type="PATRIC" id="fig|523850.10.peg.1765"/>
<dbReference type="eggNOG" id="arCOG00868">
    <property type="taxonomic scope" value="Archaea"/>
</dbReference>
<dbReference type="HOGENOM" id="CLU_008162_3_1_2"/>
<dbReference type="Proteomes" id="UP000002727">
    <property type="component" value="Chromosome"/>
</dbReference>
<dbReference type="GO" id="GO:0005886">
    <property type="term" value="C:plasma membrane"/>
    <property type="evidence" value="ECO:0007669"/>
    <property type="project" value="UniProtKB-SubCell"/>
</dbReference>
<dbReference type="GO" id="GO:0033178">
    <property type="term" value="C:proton-transporting two-sector ATPase complex, catalytic domain"/>
    <property type="evidence" value="ECO:0007669"/>
    <property type="project" value="InterPro"/>
</dbReference>
<dbReference type="GO" id="GO:0005524">
    <property type="term" value="F:ATP binding"/>
    <property type="evidence" value="ECO:0007669"/>
    <property type="project" value="UniProtKB-UniRule"/>
</dbReference>
<dbReference type="GO" id="GO:0016887">
    <property type="term" value="F:ATP hydrolysis activity"/>
    <property type="evidence" value="ECO:0007669"/>
    <property type="project" value="InterPro"/>
</dbReference>
<dbReference type="GO" id="GO:0046933">
    <property type="term" value="F:proton-transporting ATP synthase activity, rotational mechanism"/>
    <property type="evidence" value="ECO:0007669"/>
    <property type="project" value="UniProtKB-UniRule"/>
</dbReference>
<dbReference type="GO" id="GO:0046961">
    <property type="term" value="F:proton-transporting ATPase activity, rotational mechanism"/>
    <property type="evidence" value="ECO:0007669"/>
    <property type="project" value="InterPro"/>
</dbReference>
<dbReference type="GO" id="GO:0042777">
    <property type="term" value="P:proton motive force-driven plasma membrane ATP synthesis"/>
    <property type="evidence" value="ECO:0007669"/>
    <property type="project" value="UniProtKB-UniRule"/>
</dbReference>
<dbReference type="CDD" id="cd18111">
    <property type="entry name" value="ATP-synt_V_A-type_alpha_C"/>
    <property type="match status" value="1"/>
</dbReference>
<dbReference type="CDD" id="cd18119">
    <property type="entry name" value="ATP-synt_V_A-type_alpha_N"/>
    <property type="match status" value="1"/>
</dbReference>
<dbReference type="CDD" id="cd01134">
    <property type="entry name" value="V_A-ATPase_A"/>
    <property type="match status" value="1"/>
</dbReference>
<dbReference type="FunFam" id="3.40.50.300:FF:000675">
    <property type="entry name" value="V-type ATP synthase alpha chain"/>
    <property type="match status" value="1"/>
</dbReference>
<dbReference type="FunFam" id="1.10.1140.10:FF:000002">
    <property type="entry name" value="V-type proton ATPase catalytic subunit A"/>
    <property type="match status" value="1"/>
</dbReference>
<dbReference type="FunFam" id="2.40.30.20:FF:000002">
    <property type="entry name" value="V-type proton ATPase catalytic subunit A"/>
    <property type="match status" value="1"/>
</dbReference>
<dbReference type="FunFam" id="2.40.50.100:FF:000008">
    <property type="entry name" value="V-type proton ATPase catalytic subunit A"/>
    <property type="match status" value="1"/>
</dbReference>
<dbReference type="Gene3D" id="2.40.30.20">
    <property type="match status" value="1"/>
</dbReference>
<dbReference type="Gene3D" id="2.40.50.100">
    <property type="match status" value="1"/>
</dbReference>
<dbReference type="Gene3D" id="1.10.1140.10">
    <property type="entry name" value="Bovine Mitochondrial F1-atpase, Atp Synthase Beta Chain, Chain D, domain 3"/>
    <property type="match status" value="1"/>
</dbReference>
<dbReference type="Gene3D" id="3.40.50.300">
    <property type="entry name" value="P-loop containing nucleotide triphosphate hydrolases"/>
    <property type="match status" value="1"/>
</dbReference>
<dbReference type="HAMAP" id="MF_00309">
    <property type="entry name" value="ATP_synth_A_arch"/>
    <property type="match status" value="1"/>
</dbReference>
<dbReference type="InterPro" id="IPR003593">
    <property type="entry name" value="AAA+_ATPase"/>
</dbReference>
<dbReference type="InterPro" id="IPR055190">
    <property type="entry name" value="ATP-synt_VA_C"/>
</dbReference>
<dbReference type="InterPro" id="IPR031686">
    <property type="entry name" value="ATP-synth_a_Xtn"/>
</dbReference>
<dbReference type="InterPro" id="IPR023366">
    <property type="entry name" value="ATP_synth_asu-like_sf"/>
</dbReference>
<dbReference type="InterPro" id="IPR005726">
    <property type="entry name" value="ATP_synth_asu_arc"/>
</dbReference>
<dbReference type="InterPro" id="IPR020003">
    <property type="entry name" value="ATPase_a/bsu_AS"/>
</dbReference>
<dbReference type="InterPro" id="IPR004100">
    <property type="entry name" value="ATPase_F1/V1/A1_a/bsu_N"/>
</dbReference>
<dbReference type="InterPro" id="IPR036121">
    <property type="entry name" value="ATPase_F1/V1/A1_a/bsu_N_sf"/>
</dbReference>
<dbReference type="InterPro" id="IPR000194">
    <property type="entry name" value="ATPase_F1/V1/A1_a/bsu_nucl-bd"/>
</dbReference>
<dbReference type="InterPro" id="IPR024034">
    <property type="entry name" value="ATPase_F1/V1_b/a_C"/>
</dbReference>
<dbReference type="InterPro" id="IPR027417">
    <property type="entry name" value="P-loop_NTPase"/>
</dbReference>
<dbReference type="InterPro" id="IPR022878">
    <property type="entry name" value="V-ATPase_asu"/>
</dbReference>
<dbReference type="NCBIfam" id="TIGR01043">
    <property type="entry name" value="ATP_syn_A_arch"/>
    <property type="match status" value="1"/>
</dbReference>
<dbReference type="NCBIfam" id="NF003220">
    <property type="entry name" value="PRK04192.1"/>
    <property type="match status" value="1"/>
</dbReference>
<dbReference type="PANTHER" id="PTHR43607:SF1">
    <property type="entry name" value="H(+)-TRANSPORTING TWO-SECTOR ATPASE"/>
    <property type="match status" value="1"/>
</dbReference>
<dbReference type="PANTHER" id="PTHR43607">
    <property type="entry name" value="V-TYPE PROTON ATPASE CATALYTIC SUBUNIT A"/>
    <property type="match status" value="1"/>
</dbReference>
<dbReference type="Pfam" id="PF00006">
    <property type="entry name" value="ATP-synt_ab"/>
    <property type="match status" value="1"/>
</dbReference>
<dbReference type="Pfam" id="PF02874">
    <property type="entry name" value="ATP-synt_ab_N"/>
    <property type="match status" value="1"/>
</dbReference>
<dbReference type="Pfam" id="PF16886">
    <property type="entry name" value="ATP-synt_ab_Xtn"/>
    <property type="match status" value="1"/>
</dbReference>
<dbReference type="Pfam" id="PF22919">
    <property type="entry name" value="ATP-synt_VA_C"/>
    <property type="match status" value="1"/>
</dbReference>
<dbReference type="SMART" id="SM00382">
    <property type="entry name" value="AAA"/>
    <property type="match status" value="1"/>
</dbReference>
<dbReference type="SUPFAM" id="SSF47917">
    <property type="entry name" value="C-terminal domain of alpha and beta subunits of F1 ATP synthase"/>
    <property type="match status" value="1"/>
</dbReference>
<dbReference type="SUPFAM" id="SSF50615">
    <property type="entry name" value="N-terminal domain of alpha and beta subunits of F1 ATP synthase"/>
    <property type="match status" value="1"/>
</dbReference>
<dbReference type="SUPFAM" id="SSF52540">
    <property type="entry name" value="P-loop containing nucleoside triphosphate hydrolases"/>
    <property type="match status" value="1"/>
</dbReference>
<dbReference type="PROSITE" id="PS00152">
    <property type="entry name" value="ATPASE_ALPHA_BETA"/>
    <property type="match status" value="1"/>
</dbReference>
<organism>
    <name type="scientific">Thermococcus onnurineus (strain NA1)</name>
    <dbReference type="NCBI Taxonomy" id="523850"/>
    <lineage>
        <taxon>Archaea</taxon>
        <taxon>Methanobacteriati</taxon>
        <taxon>Methanobacteriota</taxon>
        <taxon>Thermococci</taxon>
        <taxon>Thermococcales</taxon>
        <taxon>Thermococcaceae</taxon>
        <taxon>Thermococcus</taxon>
    </lineage>
</organism>
<keyword id="KW-0066">ATP synthesis</keyword>
<keyword id="KW-0067">ATP-binding</keyword>
<keyword id="KW-1003">Cell membrane</keyword>
<keyword id="KW-0375">Hydrogen ion transport</keyword>
<keyword id="KW-0406">Ion transport</keyword>
<keyword id="KW-0472">Membrane</keyword>
<keyword id="KW-0547">Nucleotide-binding</keyword>
<keyword id="KW-1278">Translocase</keyword>
<keyword id="KW-0813">Transport</keyword>
<gene>
    <name evidence="1" type="primary">atpA</name>
    <name type="ordered locus">TON_1752</name>
</gene>
<proteinExistence type="inferred from homology"/>
<name>AATA_THEON</name>
<accession>B6YV14</accession>
<reference key="1">
    <citation type="journal article" date="2008" name="J. Bacteriol.">
        <title>The complete genome sequence of Thermococcus onnurineus NA1 reveals a mixed heterotrophic and carboxydotrophic metabolism.</title>
        <authorList>
            <person name="Lee H.S."/>
            <person name="Kang S.G."/>
            <person name="Bae S.S."/>
            <person name="Lim J.K."/>
            <person name="Cho Y."/>
            <person name="Kim Y.J."/>
            <person name="Jeon J.H."/>
            <person name="Cha S.-S."/>
            <person name="Kwon K.K."/>
            <person name="Kim H.-T."/>
            <person name="Park C.-J."/>
            <person name="Lee H.-W."/>
            <person name="Kim S.I."/>
            <person name="Chun J."/>
            <person name="Colwell R.R."/>
            <person name="Kim S.-J."/>
            <person name="Lee J.-H."/>
        </authorList>
    </citation>
    <scope>NUCLEOTIDE SEQUENCE [LARGE SCALE GENOMIC DNA]</scope>
    <source>
        <strain>NA1</strain>
    </source>
</reference>
<protein>
    <recommendedName>
        <fullName evidence="1">A-type ATP synthase subunit A</fullName>
        <ecNumber evidence="1">7.1.2.2</ecNumber>
    </recommendedName>
</protein>